<gene>
    <name evidence="11" type="primary">psbO</name>
    <name type="ordered locus">tll0444</name>
</gene>
<reference key="1">
    <citation type="journal article" date="2002" name="DNA Res.">
        <title>Complete genome structure of the thermophilic cyanobacterium Thermosynechococcus elongatus BP-1.</title>
        <authorList>
            <person name="Nakamura Y."/>
            <person name="Kaneko T."/>
            <person name="Sato S."/>
            <person name="Ikeuchi M."/>
            <person name="Katoh H."/>
            <person name="Sasamoto S."/>
            <person name="Watanabe A."/>
            <person name="Iriguchi M."/>
            <person name="Kawashima K."/>
            <person name="Kimura T."/>
            <person name="Kishida Y."/>
            <person name="Kiyokawa C."/>
            <person name="Kohara M."/>
            <person name="Matsumoto M."/>
            <person name="Matsuno A."/>
            <person name="Nakazaki N."/>
            <person name="Shimpo S."/>
            <person name="Sugimoto M."/>
            <person name="Takeuchi C."/>
            <person name="Yamada M."/>
            <person name="Tabata S."/>
        </authorList>
    </citation>
    <scope>NUCLEOTIDE SEQUENCE [LARGE SCALE GENOMIC DNA]</scope>
    <source>
        <strain>NIES-2133 / IAM M-273 / BP-1</strain>
    </source>
</reference>
<reference evidence="13" key="2">
    <citation type="journal article" date="2004" name="Science">
        <title>Architecture of the photosynthetic oxygen-evolving center.</title>
        <authorList>
            <person name="Ferreira K.N."/>
            <person name="Iverson T.M."/>
            <person name="Maghlaoui K."/>
            <person name="Barber J."/>
            <person name="Iwata S."/>
        </authorList>
    </citation>
    <scope>X-RAY CRYSTALLOGRAPHY (3.50 ANGSTROMS) OF 27-272 IN PHOTOSYSTEM II</scope>
    <scope>COFACTOR</scope>
    <scope>SUBUNIT</scope>
    <scope>SUBCELLULAR LOCATION</scope>
</reference>
<reference evidence="14" key="3">
    <citation type="journal article" date="2005" name="Nature">
        <title>Towards complete cofactor arrangement in the 3.0 A resolution structure of photosystem II.</title>
        <authorList>
            <person name="Loll B."/>
            <person name="Kern J."/>
            <person name="Saenger W."/>
            <person name="Zouni A."/>
            <person name="Biesiadka J."/>
        </authorList>
    </citation>
    <scope>X-RAY CRYSTALLOGRAPHY (3.00 ANGSTROMS) OF 26-272 IN PHOTOSYSTEM II</scope>
    <scope>COFACTOR</scope>
    <scope>SUBUNIT</scope>
    <scope>SUBCELLULAR LOCATION</scope>
    <source>
        <strain>NIES-2133 / IAM M-273 / BP-1</strain>
    </source>
</reference>
<reference evidence="25" key="4">
    <citation type="journal article" date="2009" name="Nat. Struct. Mol. Biol.">
        <title>Cyanobacterial photosystem II at 2.9-A resolution and the role of quinones, lipids, channels and chloride.</title>
        <authorList>
            <person name="Guskov A."/>
            <person name="Kern J."/>
            <person name="Gabdulkhakov A."/>
            <person name="Broser M."/>
            <person name="Zouni A."/>
            <person name="Saenger W."/>
        </authorList>
    </citation>
    <scope>X-RAY CRYSTALLOGRAPHY (2.90 ANGSTROMS) OF 26-272 IN PHOTOSYSTEM II</scope>
    <scope>COFACTOR</scope>
    <scope>SUBUNIT</scope>
    <scope>SUBCELLULAR LOCATION</scope>
    <scope>MASS SPECTROMETRY</scope>
    <source>
        <strain>NIES-2133 / IAM M-273 / BP-1</strain>
    </source>
</reference>
<reference evidence="15" key="5">
    <citation type="journal article" date="2010" name="J. Biol. Chem.">
        <title>Crystal structure of monomeric photosystem II from Thermosynechococcus elongatus at 3.6 A resolution.</title>
        <authorList>
            <person name="Broser M."/>
            <person name="Gabdulkhakov A."/>
            <person name="Kern J."/>
            <person name="Guskov A."/>
            <person name="Muh F."/>
            <person name="Saenger W."/>
            <person name="Zouni A."/>
        </authorList>
    </citation>
    <scope>X-RAY CRYSTALLOGRAPHY (3.60 ANGSTROMS) OF 27-272 IN PHOTOSYSTEM II</scope>
    <scope>FUNCTION</scope>
    <scope>COFACTOR</scope>
    <scope>SUBUNIT</scope>
    <scope>SUBCELLULAR LOCATION</scope>
    <scope>MASS SPECTROMETRY</scope>
    <source>
        <strain>NIES-2133 / IAM M-273 / BP-1</strain>
    </source>
</reference>
<reference evidence="26" key="6">
    <citation type="journal article" date="2011" name="J. Biol. Chem.">
        <title>Structural basis of cyanobacterial photosystem II inhibition by the herbicide terbutryn.</title>
        <authorList>
            <person name="Broser M."/>
            <person name="Glockner C."/>
            <person name="Gabdulkhakov A."/>
            <person name="Guskov A."/>
            <person name="Buchta J."/>
            <person name="Kern J."/>
            <person name="Muh F."/>
            <person name="Dau H."/>
            <person name="Saenger W."/>
            <person name="Zouni A."/>
        </authorList>
    </citation>
    <scope>X-RAY CRYSTALLOGRAPHY (3.20 ANGSTROMS) OF 26-272 IN PHOTOSYSTEM II</scope>
    <scope>FUNCTION</scope>
    <scope>COFACTOR</scope>
    <scope>SUBUNIT</scope>
    <scope>SUBCELLULAR LOCATION</scope>
</reference>
<reference evidence="16" key="7">
    <citation type="journal article" date="2012" name="Proc. Natl. Acad. Sci. U.S.A.">
        <title>Room temperature femtosecond X-ray diffraction of photosystem II microcrystals.</title>
        <authorList>
            <person name="Kern J."/>
            <person name="Alonso-Mori R."/>
            <person name="Hellmich J."/>
            <person name="Tran R."/>
            <person name="Hattne J."/>
            <person name="Laksmono H."/>
            <person name="Glockner C."/>
            <person name="Echols N."/>
            <person name="Sierra R.G."/>
            <person name="Sellberg J."/>
            <person name="Lassalle-Kaiser B."/>
            <person name="Gildea R.J."/>
            <person name="Glatzel P."/>
            <person name="Grosse-Kunstleve R.W."/>
            <person name="Latimer M.J."/>
            <person name="McQueen T.A."/>
            <person name="DiFiore D."/>
            <person name="Fry A.R."/>
            <person name="Messerschmidt M."/>
            <person name="Miahnahri A."/>
            <person name="Schafer D.W."/>
            <person name="Seibert M.M."/>
            <person name="Sokaras D."/>
            <person name="Weng T.C."/>
            <person name="Zwart P.H."/>
            <person name="White W.E."/>
            <person name="Adams P.D."/>
            <person name="Bogan M.J."/>
            <person name="Boutet S."/>
            <person name="Williams G.J."/>
            <person name="Messinger J."/>
            <person name="Sauter N.K."/>
            <person name="Zouni A."/>
            <person name="Bergmann U."/>
            <person name="Yano J."/>
            <person name="Yachandra V.K."/>
        </authorList>
    </citation>
    <scope>X-RAY CRYSTALLOGRAPHY (6.56 ANGSTROMS) OF 27-272 IN PHOTOSYSTEM II</scope>
    <scope>COFACTOR</scope>
    <scope>SUBUNIT</scope>
    <scope>SUBCELLULAR LOCATION</scope>
    <source>
        <strain>NIES-2133 / IAM M-273 / BP-1</strain>
    </source>
</reference>
<reference evidence="17 18" key="8">
    <citation type="journal article" date="2013" name="Science">
        <title>Simultaneous femtosecond X-ray spectroscopy and diffraction of photosystem II at room temperature.</title>
        <authorList>
            <person name="Kern J."/>
            <person name="Alonso-Mori R."/>
            <person name="Tran R."/>
            <person name="Hattne J."/>
            <person name="Gildea R.J."/>
            <person name="Echols N."/>
            <person name="Glockner C."/>
            <person name="Hellmich J."/>
            <person name="Laksmono H."/>
            <person name="Sierra R.G."/>
            <person name="Lassalle-Kaiser B."/>
            <person name="Koroidov S."/>
            <person name="Lampe A."/>
            <person name="Han G."/>
            <person name="Gul S."/>
            <person name="Difiore D."/>
            <person name="Milathianaki D."/>
            <person name="Fry A.R."/>
            <person name="Miahnahri A."/>
            <person name="Schafer D.W."/>
            <person name="Messerschmidt M."/>
            <person name="Seibert M.M."/>
            <person name="Koglin J.E."/>
            <person name="Sokaras D."/>
            <person name="Weng T.C."/>
            <person name="Sellberg J."/>
            <person name="Latimer M.J."/>
            <person name="Grosse-Kunstleve R.W."/>
            <person name="Zwart P.H."/>
            <person name="White W.E."/>
            <person name="Glatzel P."/>
            <person name="Adams P.D."/>
            <person name="Bogan M.J."/>
            <person name="Williams G.J."/>
            <person name="Boutet S."/>
            <person name="Messinger J."/>
            <person name="Zouni A."/>
            <person name="Sauter N.K."/>
            <person name="Yachandra V.K."/>
            <person name="Bergmann U."/>
            <person name="Yano J."/>
        </authorList>
    </citation>
    <scope>X-RAY CRYSTALLOGRAPHY (5.70 ANGSTROMS) IN PHOTOSYSTEM II</scope>
    <scope>COFACTOR</scope>
    <scope>SUBUNIT</scope>
    <scope>SUBCELLULAR LOCATION</scope>
    <source>
        <strain>NIES-2133 / IAM M-273 / BP-1</strain>
    </source>
</reference>
<reference evidence="19 20" key="9">
    <citation type="journal article" date="2014" name="Nature">
        <title>Serial time-resolved crystallography of photosystem II using a femtosecond X-ray laser.</title>
        <authorList>
            <person name="Kupitz C."/>
            <person name="Basu S."/>
            <person name="Grotjohann I."/>
            <person name="Fromme R."/>
            <person name="Zatsepin N.A."/>
            <person name="Rendek K.N."/>
            <person name="Hunter M.S."/>
            <person name="Shoeman R.L."/>
            <person name="White T.A."/>
            <person name="Wang D."/>
            <person name="James D."/>
            <person name="Yang J.H."/>
            <person name="Cobb D.E."/>
            <person name="Reeder B."/>
            <person name="Sierra R.G."/>
            <person name="Liu H."/>
            <person name="Barty A."/>
            <person name="Aquila A.L."/>
            <person name="Deponte D."/>
            <person name="Kirian R.A."/>
            <person name="Bari S."/>
            <person name="Bergkamp J.J."/>
            <person name="Beyerlein K.R."/>
            <person name="Bogan M.J."/>
            <person name="Caleman C."/>
            <person name="Chao T.C."/>
            <person name="Conrad C.E."/>
            <person name="Davis K.M."/>
            <person name="Fleckenstein H."/>
            <person name="Galli L."/>
            <person name="Hau-Riege S.P."/>
            <person name="Kassemeyer S."/>
            <person name="Laksmono H."/>
            <person name="Liang M."/>
            <person name="Lomb L."/>
            <person name="Marchesini S."/>
            <person name="Martin A.V."/>
            <person name="Messerschmidt M."/>
            <person name="Milathianaki D."/>
            <person name="Nass K."/>
            <person name="Ros A."/>
            <person name="Roy-Chowdhury S."/>
            <person name="Schmidt K."/>
            <person name="Seibert M."/>
            <person name="Steinbrener J."/>
            <person name="Stellato F."/>
            <person name="Yan L."/>
            <person name="Yoon C."/>
            <person name="Moore T.A."/>
            <person name="Moore A.L."/>
            <person name="Pushkar Y."/>
            <person name="Williams G.J."/>
            <person name="Boutet S."/>
            <person name="Doak R.B."/>
            <person name="Weierstall U."/>
            <person name="Frank M."/>
            <person name="Chapman H.N."/>
            <person name="Spence J.C."/>
            <person name="Fromme P."/>
        </authorList>
    </citation>
    <scope>X-RAY CRYSTALLOGRAPHY (5.00 ANGSTROMS) OF 30-272 IN PHOTOSYSTEM II</scope>
    <scope>COFACTOR</scope>
    <scope>SUBUNIT</scope>
    <scope>SUBCELLULAR LOCATION</scope>
    <source>
        <strain>NIES-2133 / IAM M-273 / BP-1</strain>
    </source>
</reference>
<reference evidence="21 22 23 24" key="10">
    <citation type="journal article" date="2014" name="Nat. Commun.">
        <title>Taking snapshots of photosynthetic water oxidation using femtosecond X-ray diffraction and spectroscopy.</title>
        <authorList>
            <person name="Kern J."/>
            <person name="Tran R."/>
            <person name="Alonso-Mori R."/>
            <person name="Koroidov S."/>
            <person name="Echols N."/>
            <person name="Hattne J."/>
            <person name="Ibrahim M."/>
            <person name="Gul S."/>
            <person name="Laksmono H."/>
            <person name="Sierra R.G."/>
            <person name="Gildea R.J."/>
            <person name="Han G."/>
            <person name="Hellmich J."/>
            <person name="Lassalle-Kaiser B."/>
            <person name="Chatterjee R."/>
            <person name="Brewster A.S."/>
            <person name="Stan C.A."/>
            <person name="Gloeckner C."/>
            <person name="Lampe A."/>
            <person name="DiFiore D."/>
            <person name="Milathianaki D."/>
            <person name="Fry A.R."/>
            <person name="Seibert M.M."/>
            <person name="Koglin J.E."/>
            <person name="Gallo E."/>
            <person name="Uhlig J."/>
            <person name="Sokaras D."/>
            <person name="Weng T.C."/>
            <person name="Zwart P.H."/>
            <person name="Skinner D.E."/>
            <person name="Bogan M.J."/>
            <person name="Messerschmidt M."/>
            <person name="Glatzel P."/>
            <person name="Williams G.J."/>
            <person name="Boutet S."/>
            <person name="Adams P.D."/>
            <person name="Zouni A."/>
            <person name="Messinger J."/>
            <person name="Sauter N.K."/>
            <person name="Bergmann U."/>
            <person name="Yano J."/>
            <person name="Yachandra V.K."/>
        </authorList>
    </citation>
    <scope>X-RAY CRYSTALLOGRAPHY (4.50 ANGSTROMS) IN PHOTOSYSTEM II</scope>
    <scope>FUNCTION</scope>
    <scope>COFACTOR</scope>
    <scope>SUBUNIT</scope>
    <scope>SUBCELLULAR LOCATION</scope>
    <source>
        <strain>NIES-2133 / IAM M-273 / BP-1</strain>
    </source>
</reference>
<sequence length="272" mass="29608">MKYRILMATLLAVCLGIFSLSAPAFAAKQTLTYDDIVGTGLANKCPTLDDTARGAYPIDSSQTYRIARLCLQPTTFLVKEEPKNKRQEAEFVPTKLVTRETTSLDQIQGELKVNSDGSLTFVEEDGIDFQPVTVQMAGGERIPLLFTVKNLVASTQPNVTSITTSTDFKGEFNVPSYRTANFLDPKGRGLASGYDSAIALPQAKEEELARANVKRFSLTKGQISLNVAKVDGRTGEIAGTFESEQLSDDDMGAHEPHEVKIQGVFYASIEPA</sequence>
<accession>P0A431</accession>
<accession>P55221</accession>
<accession>Q54074</accession>
<organism>
    <name type="scientific">Thermosynechococcus vestitus (strain NIES-2133 / IAM M-273 / BP-1)</name>
    <dbReference type="NCBI Taxonomy" id="197221"/>
    <lineage>
        <taxon>Bacteria</taxon>
        <taxon>Bacillati</taxon>
        <taxon>Cyanobacteriota</taxon>
        <taxon>Cyanophyceae</taxon>
        <taxon>Acaryochloridales</taxon>
        <taxon>Thermosynechococcaceae</taxon>
        <taxon>Thermosynechococcus</taxon>
    </lineage>
</organism>
<proteinExistence type="evidence at protein level"/>
<dbReference type="EMBL" id="BA000039">
    <property type="protein sequence ID" value="BAC07996.1"/>
    <property type="molecule type" value="Genomic_DNA"/>
</dbReference>
<dbReference type="RefSeq" id="NP_681234.1">
    <property type="nucleotide sequence ID" value="NC_004113.1"/>
</dbReference>
<dbReference type="RefSeq" id="WP_011056297.1">
    <property type="nucleotide sequence ID" value="NC_004113.1"/>
</dbReference>
<dbReference type="PDB" id="1S5L">
    <property type="method" value="X-ray"/>
    <property type="resolution" value="3.50 A"/>
    <property type="chains" value="O/o=27-272"/>
</dbReference>
<dbReference type="PDB" id="2AXT">
    <property type="method" value="X-ray"/>
    <property type="resolution" value="3.00 A"/>
    <property type="chains" value="O/o=26-272"/>
</dbReference>
<dbReference type="PDB" id="3KZI">
    <property type="method" value="X-ray"/>
    <property type="resolution" value="3.60 A"/>
    <property type="chains" value="O=27-272"/>
</dbReference>
<dbReference type="PDB" id="4FBY">
    <property type="method" value="X-ray"/>
    <property type="resolution" value="6.56 A"/>
    <property type="chains" value="O/f=27-272"/>
</dbReference>
<dbReference type="PDB" id="4IXQ">
    <property type="method" value="X-ray"/>
    <property type="resolution" value="5.70 A"/>
    <property type="chains" value="O/o=1-272"/>
</dbReference>
<dbReference type="PDB" id="4IXR">
    <property type="method" value="X-ray"/>
    <property type="resolution" value="5.90 A"/>
    <property type="chains" value="O/o=1-272"/>
</dbReference>
<dbReference type="PDB" id="4PBU">
    <property type="method" value="X-ray"/>
    <property type="resolution" value="5.00 A"/>
    <property type="chains" value="O/o=30-272"/>
</dbReference>
<dbReference type="PDB" id="4PJ0">
    <property type="method" value="X-ray"/>
    <property type="resolution" value="2.44 A"/>
    <property type="chains" value="O/o=1-272"/>
</dbReference>
<dbReference type="PDB" id="4RVY">
    <property type="method" value="X-ray"/>
    <property type="resolution" value="5.50 A"/>
    <property type="chains" value="O/o=30-272"/>
</dbReference>
<dbReference type="PDB" id="4TNH">
    <property type="method" value="X-ray"/>
    <property type="resolution" value="4.90 A"/>
    <property type="chains" value="O/o=1-272"/>
</dbReference>
<dbReference type="PDB" id="4TNI">
    <property type="method" value="X-ray"/>
    <property type="resolution" value="4.60 A"/>
    <property type="chains" value="O/o=1-272"/>
</dbReference>
<dbReference type="PDB" id="4TNJ">
    <property type="method" value="X-ray"/>
    <property type="resolution" value="4.50 A"/>
    <property type="chains" value="O/o=1-272"/>
</dbReference>
<dbReference type="PDB" id="4TNK">
    <property type="method" value="X-ray"/>
    <property type="resolution" value="5.20 A"/>
    <property type="chains" value="O/o=1-272"/>
</dbReference>
<dbReference type="PDB" id="4V62">
    <property type="method" value="X-ray"/>
    <property type="resolution" value="2.90 A"/>
    <property type="chains" value="AO/BO=26-272"/>
</dbReference>
<dbReference type="PDB" id="4V82">
    <property type="method" value="X-ray"/>
    <property type="resolution" value="3.20 A"/>
    <property type="chains" value="AO/BO=26-272"/>
</dbReference>
<dbReference type="PDB" id="5E79">
    <property type="method" value="X-ray"/>
    <property type="resolution" value="3.50 A"/>
    <property type="chains" value="O/o=30-272"/>
</dbReference>
<dbReference type="PDB" id="5E7C">
    <property type="method" value="X-ray"/>
    <property type="resolution" value="4.50 A"/>
    <property type="chains" value="O/o=30-272"/>
</dbReference>
<dbReference type="PDB" id="5H2F">
    <property type="method" value="X-ray"/>
    <property type="resolution" value="2.20 A"/>
    <property type="chains" value="O/o=30-272"/>
</dbReference>
<dbReference type="PDB" id="5KAF">
    <property type="method" value="X-ray"/>
    <property type="resolution" value="3.00 A"/>
    <property type="chains" value="O/o=1-272"/>
</dbReference>
<dbReference type="PDB" id="5KAI">
    <property type="method" value="X-ray"/>
    <property type="resolution" value="2.80 A"/>
    <property type="chains" value="O/o=1-272"/>
</dbReference>
<dbReference type="PDB" id="5MX2">
    <property type="method" value="X-ray"/>
    <property type="resolution" value="2.20 A"/>
    <property type="chains" value="O/o=1-272"/>
</dbReference>
<dbReference type="PDB" id="5TIS">
    <property type="method" value="X-ray"/>
    <property type="resolution" value="2.25 A"/>
    <property type="chains" value="O/o=1-272"/>
</dbReference>
<dbReference type="PDB" id="5ZZN">
    <property type="method" value="X-ray"/>
    <property type="resolution" value="2.10 A"/>
    <property type="chains" value="O/o=30-272"/>
</dbReference>
<dbReference type="PDB" id="6DHE">
    <property type="method" value="X-ray"/>
    <property type="resolution" value="2.05 A"/>
    <property type="chains" value="O/o=29-272"/>
</dbReference>
<dbReference type="PDB" id="6DHF">
    <property type="method" value="X-ray"/>
    <property type="resolution" value="2.08 A"/>
    <property type="chains" value="O/o=29-272"/>
</dbReference>
<dbReference type="PDB" id="6DHG">
    <property type="method" value="X-ray"/>
    <property type="resolution" value="2.50 A"/>
    <property type="chains" value="O/o=29-272"/>
</dbReference>
<dbReference type="PDB" id="6DHH">
    <property type="method" value="X-ray"/>
    <property type="resolution" value="2.20 A"/>
    <property type="chains" value="O/o=29-272"/>
</dbReference>
<dbReference type="PDB" id="6DHO">
    <property type="method" value="X-ray"/>
    <property type="resolution" value="2.07 A"/>
    <property type="chains" value="O/o=29-272"/>
</dbReference>
<dbReference type="PDB" id="6DHP">
    <property type="method" value="X-ray"/>
    <property type="resolution" value="2.04 A"/>
    <property type="chains" value="O/o=29-272"/>
</dbReference>
<dbReference type="PDB" id="6W1O">
    <property type="method" value="X-ray"/>
    <property type="resolution" value="2.08 A"/>
    <property type="chains" value="O/o=1-272"/>
</dbReference>
<dbReference type="PDB" id="6W1P">
    <property type="method" value="X-ray"/>
    <property type="resolution" value="2.26 A"/>
    <property type="chains" value="O/o=1-272"/>
</dbReference>
<dbReference type="PDB" id="6W1Q">
    <property type="method" value="X-ray"/>
    <property type="resolution" value="2.27 A"/>
    <property type="chains" value="O/o=1-272"/>
</dbReference>
<dbReference type="PDB" id="6W1R">
    <property type="method" value="X-ray"/>
    <property type="resolution" value="2.23 A"/>
    <property type="chains" value="O/o=1-272"/>
</dbReference>
<dbReference type="PDB" id="6W1T">
    <property type="method" value="X-ray"/>
    <property type="resolution" value="2.01 A"/>
    <property type="chains" value="O/o=1-272"/>
</dbReference>
<dbReference type="PDB" id="6W1U">
    <property type="method" value="X-ray"/>
    <property type="resolution" value="2.09 A"/>
    <property type="chains" value="O/o=1-272"/>
</dbReference>
<dbReference type="PDB" id="6W1V">
    <property type="method" value="X-ray"/>
    <property type="resolution" value="2.09 A"/>
    <property type="chains" value="O/o=1-272"/>
</dbReference>
<dbReference type="PDB" id="7RF1">
    <property type="method" value="X-ray"/>
    <property type="resolution" value="1.89 A"/>
    <property type="chains" value="O/o=1-272"/>
</dbReference>
<dbReference type="PDB" id="7RF2">
    <property type="method" value="X-ray"/>
    <property type="resolution" value="2.08 A"/>
    <property type="chains" value="O/o=1-272"/>
</dbReference>
<dbReference type="PDB" id="7RF3">
    <property type="method" value="X-ray"/>
    <property type="resolution" value="2.26 A"/>
    <property type="chains" value="O/o=1-272"/>
</dbReference>
<dbReference type="PDB" id="7RF4">
    <property type="method" value="X-ray"/>
    <property type="resolution" value="2.27 A"/>
    <property type="chains" value="O/o=1-272"/>
</dbReference>
<dbReference type="PDB" id="7RF5">
    <property type="method" value="X-ray"/>
    <property type="resolution" value="2.23 A"/>
    <property type="chains" value="O/o=1-272"/>
</dbReference>
<dbReference type="PDB" id="7RF6">
    <property type="method" value="X-ray"/>
    <property type="resolution" value="2.01 A"/>
    <property type="chains" value="O/o=1-272"/>
</dbReference>
<dbReference type="PDB" id="7RF7">
    <property type="method" value="X-ray"/>
    <property type="resolution" value="2.09 A"/>
    <property type="chains" value="O/o=1-272"/>
</dbReference>
<dbReference type="PDB" id="7RF8">
    <property type="method" value="X-ray"/>
    <property type="resolution" value="2.09 A"/>
    <property type="chains" value="O/o=1-272"/>
</dbReference>
<dbReference type="PDB" id="7YQ2">
    <property type="method" value="X-ray"/>
    <property type="resolution" value="1.90 A"/>
    <property type="chains" value="O/o=1-272"/>
</dbReference>
<dbReference type="PDB" id="7YQ7">
    <property type="method" value="X-ray"/>
    <property type="resolution" value="1.90 A"/>
    <property type="chains" value="O/o=1-272"/>
</dbReference>
<dbReference type="PDB" id="8EZ5">
    <property type="method" value="X-ray"/>
    <property type="resolution" value="2.09 A"/>
    <property type="chains" value="O/o=1-272"/>
</dbReference>
<dbReference type="PDB" id="8F4C">
    <property type="method" value="X-ray"/>
    <property type="resolution" value="2.00 A"/>
    <property type="chains" value="O/o=1-272"/>
</dbReference>
<dbReference type="PDB" id="8F4D">
    <property type="method" value="X-ray"/>
    <property type="resolution" value="2.15 A"/>
    <property type="chains" value="O/o=1-272"/>
</dbReference>
<dbReference type="PDB" id="8F4E">
    <property type="method" value="X-ray"/>
    <property type="resolution" value="2.09 A"/>
    <property type="chains" value="O/o=1-272"/>
</dbReference>
<dbReference type="PDB" id="8F4F">
    <property type="method" value="X-ray"/>
    <property type="resolution" value="2.03 A"/>
    <property type="chains" value="O/o=1-272"/>
</dbReference>
<dbReference type="PDB" id="8F4G">
    <property type="method" value="X-ray"/>
    <property type="resolution" value="2.03 A"/>
    <property type="chains" value="O/o=1-272"/>
</dbReference>
<dbReference type="PDB" id="8F4H">
    <property type="method" value="X-ray"/>
    <property type="resolution" value="2.10 A"/>
    <property type="chains" value="O/o=1-272"/>
</dbReference>
<dbReference type="PDB" id="8F4I">
    <property type="method" value="X-ray"/>
    <property type="resolution" value="2.00 A"/>
    <property type="chains" value="O/o=1-272"/>
</dbReference>
<dbReference type="PDB" id="8F4J">
    <property type="method" value="X-ray"/>
    <property type="resolution" value="2.00 A"/>
    <property type="chains" value="O/o=1-272"/>
</dbReference>
<dbReference type="PDB" id="8F4K">
    <property type="method" value="X-ray"/>
    <property type="resolution" value="2.16 A"/>
    <property type="chains" value="O/o=1-272"/>
</dbReference>
<dbReference type="PDB" id="9EVX">
    <property type="method" value="EM"/>
    <property type="resolution" value="1.71 A"/>
    <property type="chains" value="O/o=1-272"/>
</dbReference>
<dbReference type="PDBsum" id="1S5L"/>
<dbReference type="PDBsum" id="2AXT"/>
<dbReference type="PDBsum" id="3KZI"/>
<dbReference type="PDBsum" id="4FBY"/>
<dbReference type="PDBsum" id="4IXQ"/>
<dbReference type="PDBsum" id="4IXR"/>
<dbReference type="PDBsum" id="4PBU"/>
<dbReference type="PDBsum" id="4PJ0"/>
<dbReference type="PDBsum" id="4RVY"/>
<dbReference type="PDBsum" id="4TNH"/>
<dbReference type="PDBsum" id="4TNI"/>
<dbReference type="PDBsum" id="4TNJ"/>
<dbReference type="PDBsum" id="4TNK"/>
<dbReference type="PDBsum" id="4V62"/>
<dbReference type="PDBsum" id="4V82"/>
<dbReference type="PDBsum" id="5E79"/>
<dbReference type="PDBsum" id="5E7C"/>
<dbReference type="PDBsum" id="5H2F"/>
<dbReference type="PDBsum" id="5KAF"/>
<dbReference type="PDBsum" id="5KAI"/>
<dbReference type="PDBsum" id="5MX2"/>
<dbReference type="PDBsum" id="5TIS"/>
<dbReference type="PDBsum" id="5ZZN"/>
<dbReference type="PDBsum" id="6DHE"/>
<dbReference type="PDBsum" id="6DHF"/>
<dbReference type="PDBsum" id="6DHG"/>
<dbReference type="PDBsum" id="6DHH"/>
<dbReference type="PDBsum" id="6DHO"/>
<dbReference type="PDBsum" id="6DHP"/>
<dbReference type="PDBsum" id="6W1O"/>
<dbReference type="PDBsum" id="6W1P"/>
<dbReference type="PDBsum" id="6W1Q"/>
<dbReference type="PDBsum" id="6W1R"/>
<dbReference type="PDBsum" id="6W1T"/>
<dbReference type="PDBsum" id="6W1U"/>
<dbReference type="PDBsum" id="6W1V"/>
<dbReference type="PDBsum" id="7RF1"/>
<dbReference type="PDBsum" id="7RF2"/>
<dbReference type="PDBsum" id="7RF3"/>
<dbReference type="PDBsum" id="7RF4"/>
<dbReference type="PDBsum" id="7RF5"/>
<dbReference type="PDBsum" id="7RF6"/>
<dbReference type="PDBsum" id="7RF7"/>
<dbReference type="PDBsum" id="7RF8"/>
<dbReference type="PDBsum" id="7YQ2"/>
<dbReference type="PDBsum" id="7YQ7"/>
<dbReference type="PDBsum" id="8EZ5"/>
<dbReference type="PDBsum" id="8F4C"/>
<dbReference type="PDBsum" id="8F4D"/>
<dbReference type="PDBsum" id="8F4E"/>
<dbReference type="PDBsum" id="8F4F"/>
<dbReference type="PDBsum" id="8F4G"/>
<dbReference type="PDBsum" id="8F4H"/>
<dbReference type="PDBsum" id="8F4I"/>
<dbReference type="PDBsum" id="8F4J"/>
<dbReference type="PDBsum" id="8F4K"/>
<dbReference type="PDBsum" id="9EVX"/>
<dbReference type="EMDB" id="EMD-50019"/>
<dbReference type="SMR" id="P0A431"/>
<dbReference type="DIP" id="DIP-48499N"/>
<dbReference type="IntAct" id="P0A431">
    <property type="interactions" value="1"/>
</dbReference>
<dbReference type="STRING" id="197221.gene:10747033"/>
<dbReference type="EnsemblBacteria" id="BAC07996">
    <property type="protein sequence ID" value="BAC07996"/>
    <property type="gene ID" value="BAC07996"/>
</dbReference>
<dbReference type="KEGG" id="tel:tll0444"/>
<dbReference type="PATRIC" id="fig|197221.4.peg.468"/>
<dbReference type="eggNOG" id="ENOG502Z7ZP">
    <property type="taxonomic scope" value="Bacteria"/>
</dbReference>
<dbReference type="EvolutionaryTrace" id="P0A431"/>
<dbReference type="Proteomes" id="UP000000440">
    <property type="component" value="Chromosome"/>
</dbReference>
<dbReference type="GO" id="GO:0009654">
    <property type="term" value="C:photosystem II oxygen evolving complex"/>
    <property type="evidence" value="ECO:0007669"/>
    <property type="project" value="InterPro"/>
</dbReference>
<dbReference type="GO" id="GO:0031676">
    <property type="term" value="C:plasma membrane-derived thylakoid membrane"/>
    <property type="evidence" value="ECO:0007669"/>
    <property type="project" value="UniProtKB-SubCell"/>
</dbReference>
<dbReference type="GO" id="GO:0010242">
    <property type="term" value="F:oxygen evolving activity"/>
    <property type="evidence" value="ECO:0007669"/>
    <property type="project" value="InterPro"/>
</dbReference>
<dbReference type="GO" id="GO:0010207">
    <property type="term" value="P:photosystem II assembly"/>
    <property type="evidence" value="ECO:0007669"/>
    <property type="project" value="InterPro"/>
</dbReference>
<dbReference type="GO" id="GO:0042549">
    <property type="term" value="P:photosystem II stabilization"/>
    <property type="evidence" value="ECO:0007669"/>
    <property type="project" value="InterPro"/>
</dbReference>
<dbReference type="Gene3D" id="3.30.2050.10">
    <property type="entry name" value="photosynthetic oxygen evolving center domain"/>
    <property type="match status" value="1"/>
</dbReference>
<dbReference type="Gene3D" id="2.40.160.30">
    <property type="entry name" value="Photosystem II, cytochrome c-550 precursor"/>
    <property type="match status" value="1"/>
</dbReference>
<dbReference type="InterPro" id="IPR011250">
    <property type="entry name" value="OMP/PagP_b-brl"/>
</dbReference>
<dbReference type="InterPro" id="IPR002628">
    <property type="entry name" value="PsbO"/>
</dbReference>
<dbReference type="PANTHER" id="PTHR34058">
    <property type="entry name" value="OXYGEN-EVOLVING ENHANCER PROTEIN 1-2, CHLOROPLASTIC"/>
    <property type="match status" value="1"/>
</dbReference>
<dbReference type="Pfam" id="PF01716">
    <property type="entry name" value="MSP"/>
    <property type="match status" value="1"/>
</dbReference>
<dbReference type="SUPFAM" id="SSF56925">
    <property type="entry name" value="OMPA-like"/>
    <property type="match status" value="1"/>
</dbReference>
<evidence type="ECO:0000250" key="1">
    <source>
        <dbReference type="UniProtKB" id="P10549"/>
    </source>
</evidence>
<evidence type="ECO:0000269" key="2">
    <source>
    </source>
</evidence>
<evidence type="ECO:0000269" key="3">
    <source>
    </source>
</evidence>
<evidence type="ECO:0000269" key="4">
    <source>
    </source>
</evidence>
<evidence type="ECO:0000269" key="5">
    <source>
    </source>
</evidence>
<evidence type="ECO:0000269" key="6">
    <source>
    </source>
</evidence>
<evidence type="ECO:0000269" key="7">
    <source>
    </source>
</evidence>
<evidence type="ECO:0000269" key="8">
    <source>
    </source>
</evidence>
<evidence type="ECO:0000269" key="9">
    <source>
    </source>
</evidence>
<evidence type="ECO:0000269" key="10">
    <source>
    </source>
</evidence>
<evidence type="ECO:0000303" key="11">
    <source>
    </source>
</evidence>
<evidence type="ECO:0000305" key="12"/>
<evidence type="ECO:0007744" key="13">
    <source>
        <dbReference type="PDB" id="1S5L"/>
    </source>
</evidence>
<evidence type="ECO:0007744" key="14">
    <source>
        <dbReference type="PDB" id="2AXT"/>
    </source>
</evidence>
<evidence type="ECO:0007744" key="15">
    <source>
        <dbReference type="PDB" id="3KZI"/>
    </source>
</evidence>
<evidence type="ECO:0007744" key="16">
    <source>
        <dbReference type="PDB" id="4FBY"/>
    </source>
</evidence>
<evidence type="ECO:0007744" key="17">
    <source>
        <dbReference type="PDB" id="4IXQ"/>
    </source>
</evidence>
<evidence type="ECO:0007744" key="18">
    <source>
        <dbReference type="PDB" id="4IXR"/>
    </source>
</evidence>
<evidence type="ECO:0007744" key="19">
    <source>
        <dbReference type="PDB" id="4PBU"/>
    </source>
</evidence>
<evidence type="ECO:0007744" key="20">
    <source>
        <dbReference type="PDB" id="4RVY"/>
    </source>
</evidence>
<evidence type="ECO:0007744" key="21">
    <source>
        <dbReference type="PDB" id="4TNH"/>
    </source>
</evidence>
<evidence type="ECO:0007744" key="22">
    <source>
        <dbReference type="PDB" id="4TNI"/>
    </source>
</evidence>
<evidence type="ECO:0007744" key="23">
    <source>
        <dbReference type="PDB" id="4TNJ"/>
    </source>
</evidence>
<evidence type="ECO:0007744" key="24">
    <source>
        <dbReference type="PDB" id="4TNK"/>
    </source>
</evidence>
<evidence type="ECO:0007744" key="25">
    <source>
        <dbReference type="PDB" id="4V62"/>
    </source>
</evidence>
<evidence type="ECO:0007744" key="26">
    <source>
        <dbReference type="PDB" id="4V82"/>
    </source>
</evidence>
<evidence type="ECO:0007829" key="27">
    <source>
        <dbReference type="PDB" id="1S5L"/>
    </source>
</evidence>
<evidence type="ECO:0007829" key="28">
    <source>
        <dbReference type="PDB" id="7YQ2"/>
    </source>
</evidence>
<evidence type="ECO:0007829" key="29">
    <source>
        <dbReference type="PDB" id="8F4F"/>
    </source>
</evidence>
<evidence type="ECO:0007829" key="30">
    <source>
        <dbReference type="PDB" id="8F4H"/>
    </source>
</evidence>
<feature type="signal peptide" evidence="4 5">
    <location>
        <begin position="1"/>
        <end position="26"/>
    </location>
</feature>
<feature type="chain" id="PRO_0000029567" description="Photosystem II extrinsic protein O">
    <location>
        <begin position="27"/>
        <end position="272"/>
    </location>
</feature>
<feature type="helix" evidence="28">
    <location>
        <begin position="33"/>
        <end position="36"/>
    </location>
</feature>
<feature type="turn" evidence="30">
    <location>
        <begin position="37"/>
        <end position="40"/>
    </location>
</feature>
<feature type="helix" evidence="28">
    <location>
        <begin position="41"/>
        <end position="43"/>
    </location>
</feature>
<feature type="strand" evidence="29">
    <location>
        <begin position="55"/>
        <end position="57"/>
    </location>
</feature>
<feature type="strand" evidence="28">
    <location>
        <begin position="62"/>
        <end position="79"/>
    </location>
</feature>
<feature type="strand" evidence="28">
    <location>
        <begin position="83"/>
        <end position="87"/>
    </location>
</feature>
<feature type="strand" evidence="28">
    <location>
        <begin position="91"/>
        <end position="93"/>
    </location>
</feature>
<feature type="strand" evidence="27">
    <location>
        <begin position="95"/>
        <end position="98"/>
    </location>
</feature>
<feature type="strand" evidence="28">
    <location>
        <begin position="104"/>
        <end position="113"/>
    </location>
</feature>
<feature type="strand" evidence="28">
    <location>
        <begin position="119"/>
        <end position="127"/>
    </location>
</feature>
<feature type="strand" evidence="28">
    <location>
        <begin position="129"/>
        <end position="135"/>
    </location>
</feature>
<feature type="helix" evidence="29">
    <location>
        <begin position="137"/>
        <end position="139"/>
    </location>
</feature>
<feature type="strand" evidence="28">
    <location>
        <begin position="141"/>
        <end position="147"/>
    </location>
</feature>
<feature type="strand" evidence="28">
    <location>
        <begin position="152"/>
        <end position="154"/>
    </location>
</feature>
<feature type="strand" evidence="28">
    <location>
        <begin position="160"/>
        <end position="162"/>
    </location>
</feature>
<feature type="strand" evidence="28">
    <location>
        <begin position="167"/>
        <end position="175"/>
    </location>
</feature>
<feature type="strand" evidence="28">
    <location>
        <begin position="190"/>
        <end position="196"/>
    </location>
</feature>
<feature type="helix" evidence="28">
    <location>
        <begin position="206"/>
        <end position="208"/>
    </location>
</feature>
<feature type="helix" evidence="28">
    <location>
        <begin position="209"/>
        <end position="212"/>
    </location>
</feature>
<feature type="strand" evidence="28">
    <location>
        <begin position="218"/>
        <end position="231"/>
    </location>
</feature>
<feature type="turn" evidence="28">
    <location>
        <begin position="232"/>
        <end position="235"/>
    </location>
</feature>
<feature type="strand" evidence="28">
    <location>
        <begin position="236"/>
        <end position="246"/>
    </location>
</feature>
<feature type="turn" evidence="28">
    <location>
        <begin position="250"/>
        <end position="253"/>
    </location>
</feature>
<feature type="strand" evidence="28">
    <location>
        <begin position="258"/>
        <end position="272"/>
    </location>
</feature>
<keyword id="KW-0002">3D-structure</keyword>
<keyword id="KW-0472">Membrane</keyword>
<keyword id="KW-0602">Photosynthesis</keyword>
<keyword id="KW-0604">Photosystem II</keyword>
<keyword id="KW-1185">Reference proteome</keyword>
<keyword id="KW-0732">Signal</keyword>
<keyword id="KW-0793">Thylakoid</keyword>
<name>PSBO_THEVB</name>
<protein>
    <recommendedName>
        <fullName>Photosystem II extrinsic protein O</fullName>
        <shortName>PsbO</shortName>
    </recommendedName>
    <alternativeName>
        <fullName evidence="11">Photosystem II manganese-stabilizing polypeptide</fullName>
        <shortName evidence="11">MSP</shortName>
    </alternativeName>
</protein>
<comment type="function">
    <text evidence="1 5 6 9">One of the extrinsic, lumenal subunits of photosystem II (PSII), which stabilize and protect the oxygen-evolving complex. PSII is a light-driven water plastoquinone oxidoreductase, using light energy to abstract electrons from H(2)O, generating a proton gradient subsequently used for ATP formation (PubMed:20558739, PubMed:25006873). Required for dimerization of PSII and for binding of PsbQ to PSII (By similarity).</text>
</comment>
<comment type="cofactor">
    <text evidence="2 3 4 5 6 7 8 9 10">PSII binds multiple chlorophylls, carotenoids and specific lipids.</text>
</comment>
<comment type="subunit">
    <text evidence="2 3 4 5 6 7 8 9 10">PSII is composed of 1 copy each of membrane proteins PsbA, PsbB, PsbC, PsbD, PsbE, PsbF, PsbH, PsbI, PsbJ, PsbK, PsbL, PsbM, PsbT, PsbX, PsbY, PsbZ, Psb30/Ycf12, peripheral proteins PsbO, CyanoQ (PsbQ), PsbU, PsbV and a large number of cofactors. It forms dimeric complexes.</text>
</comment>
<comment type="subcellular location">
    <subcellularLocation>
        <location evidence="2 3 4 5 6 7 8 9 10">Cellular thylakoid membrane</location>
        <topology evidence="2 3 4 5 6 7 8 9 10">Peripheral membrane protein</topology>
        <orientation evidence="2 3 4 5 6 7 8 9 10">Lumenal side</orientation>
    </subcellularLocation>
</comment>
<comment type="mass spectrometry" mass="26830.0" error="30.0" method="MALDI" evidence="4"/>
<comment type="mass spectrometry" mass="26820.0" method="MALDI" evidence="5"/>
<comment type="similarity">
    <text evidence="12">Belongs to the PsbO family.</text>
</comment>